<protein>
    <recommendedName>
        <fullName evidence="1">CinA-like protein</fullName>
    </recommendedName>
</protein>
<accession>Q8KAX2</accession>
<name>CINAL_CHLTE</name>
<organism>
    <name type="scientific">Chlorobaculum tepidum (strain ATCC 49652 / DSM 12025 / NBRC 103806 / TLS)</name>
    <name type="common">Chlorobium tepidum</name>
    <dbReference type="NCBI Taxonomy" id="194439"/>
    <lineage>
        <taxon>Bacteria</taxon>
        <taxon>Pseudomonadati</taxon>
        <taxon>Chlorobiota</taxon>
        <taxon>Chlorobiia</taxon>
        <taxon>Chlorobiales</taxon>
        <taxon>Chlorobiaceae</taxon>
        <taxon>Chlorobaculum</taxon>
    </lineage>
</organism>
<reference key="1">
    <citation type="journal article" date="2002" name="Proc. Natl. Acad. Sci. U.S.A.">
        <title>The complete genome sequence of Chlorobium tepidum TLS, a photosynthetic, anaerobic, green-sulfur bacterium.</title>
        <authorList>
            <person name="Eisen J.A."/>
            <person name="Nelson K.E."/>
            <person name="Paulsen I.T."/>
            <person name="Heidelberg J.F."/>
            <person name="Wu M."/>
            <person name="Dodson R.J."/>
            <person name="DeBoy R.T."/>
            <person name="Gwinn M.L."/>
            <person name="Nelson W.C."/>
            <person name="Haft D.H."/>
            <person name="Hickey E.K."/>
            <person name="Peterson J.D."/>
            <person name="Durkin A.S."/>
            <person name="Kolonay J.F."/>
            <person name="Yang F."/>
            <person name="Holt I.E."/>
            <person name="Umayam L.A."/>
            <person name="Mason T.M."/>
            <person name="Brenner M."/>
            <person name="Shea T.P."/>
            <person name="Parksey D.S."/>
            <person name="Nierman W.C."/>
            <person name="Feldblyum T.V."/>
            <person name="Hansen C.L."/>
            <person name="Craven M.B."/>
            <person name="Radune D."/>
            <person name="Vamathevan J.J."/>
            <person name="Khouri H.M."/>
            <person name="White O."/>
            <person name="Gruber T.M."/>
            <person name="Ketchum K.A."/>
            <person name="Venter J.C."/>
            <person name="Tettelin H."/>
            <person name="Bryant D.A."/>
            <person name="Fraser C.M."/>
        </authorList>
    </citation>
    <scope>NUCLEOTIDE SEQUENCE [LARGE SCALE GENOMIC DNA]</scope>
    <source>
        <strain>ATCC 49652 / DSM 12025 / NBRC 103806 / TLS</strain>
    </source>
</reference>
<feature type="chain" id="PRO_1000071771" description="CinA-like protein">
    <location>
        <begin position="1"/>
        <end position="423"/>
    </location>
</feature>
<gene>
    <name type="ordered locus">CT2029</name>
</gene>
<proteinExistence type="inferred from homology"/>
<keyword id="KW-1185">Reference proteome</keyword>
<sequence>MKAIIISIGDELLKGHRVNTNAPFIARELGNIGIPVTRIITCSDDPQAIRDSVTLALTEAEAVFVTGGLGPTNDDRTRDAVRALLGRGLALDEPSFERIADYFRRRNRPVTEVMKDQAMVIEGSIAIPNTKGTAPGMIIECAPRFAGRHLVLMPGVPAEMEAMMRLTVVPFFAPLSGAFIRHTPVMTMGIGETQLADMIVEVEDSLPSGTTLAYLPHAAGVSLMVSTSGARREDVDAENRRVVEAIVAKAGRFVYATSEVTLEEVVVNLLLERKLTVAVAESCTGGLLGSRLTDVPGSSGCFLEGLVTYSNQAKVRLLGVDPATIEAHGAVSEPVAKEMARGCLERSGADISVSTTGIAGPGGGTPEKPVGTVCVGIASKLPDGAVRVEAARFVMHGDRHQNKIRFSEAALRGLLVRLKEMEF</sequence>
<comment type="similarity">
    <text evidence="1">Belongs to the CinA family.</text>
</comment>
<dbReference type="EMBL" id="AE006470">
    <property type="protein sequence ID" value="AAM73246.1"/>
    <property type="molecule type" value="Genomic_DNA"/>
</dbReference>
<dbReference type="RefSeq" id="NP_662904.1">
    <property type="nucleotide sequence ID" value="NC_002932.3"/>
</dbReference>
<dbReference type="RefSeq" id="WP_010933684.1">
    <property type="nucleotide sequence ID" value="NC_002932.3"/>
</dbReference>
<dbReference type="SMR" id="Q8KAX2"/>
<dbReference type="STRING" id="194439.CT2029"/>
<dbReference type="EnsemblBacteria" id="AAM73246">
    <property type="protein sequence ID" value="AAM73246"/>
    <property type="gene ID" value="CT2029"/>
</dbReference>
<dbReference type="KEGG" id="cte:CT2029"/>
<dbReference type="PATRIC" id="fig|194439.7.peg.1838"/>
<dbReference type="eggNOG" id="COG1058">
    <property type="taxonomic scope" value="Bacteria"/>
</dbReference>
<dbReference type="eggNOG" id="COG1546">
    <property type="taxonomic scope" value="Bacteria"/>
</dbReference>
<dbReference type="HOGENOM" id="CLU_030805_9_3_10"/>
<dbReference type="OrthoDB" id="9801454at2"/>
<dbReference type="Proteomes" id="UP000001007">
    <property type="component" value="Chromosome"/>
</dbReference>
<dbReference type="CDD" id="cd00885">
    <property type="entry name" value="cinA"/>
    <property type="match status" value="1"/>
</dbReference>
<dbReference type="Gene3D" id="3.90.950.20">
    <property type="entry name" value="CinA-like"/>
    <property type="match status" value="1"/>
</dbReference>
<dbReference type="Gene3D" id="3.40.980.10">
    <property type="entry name" value="MoaB/Mog-like domain"/>
    <property type="match status" value="1"/>
</dbReference>
<dbReference type="HAMAP" id="MF_00226_B">
    <property type="entry name" value="CinA_B"/>
    <property type="match status" value="1"/>
</dbReference>
<dbReference type="InterPro" id="IPR050101">
    <property type="entry name" value="CinA"/>
</dbReference>
<dbReference type="InterPro" id="IPR036653">
    <property type="entry name" value="CinA-like_C"/>
</dbReference>
<dbReference type="InterPro" id="IPR008136">
    <property type="entry name" value="CinA_C"/>
</dbReference>
<dbReference type="InterPro" id="IPR041424">
    <property type="entry name" value="CinA_KH"/>
</dbReference>
<dbReference type="InterPro" id="IPR008135">
    <property type="entry name" value="Competence-induced_CinA"/>
</dbReference>
<dbReference type="InterPro" id="IPR036425">
    <property type="entry name" value="MoaB/Mog-like_dom_sf"/>
</dbReference>
<dbReference type="InterPro" id="IPR001453">
    <property type="entry name" value="MoaB/Mog_dom"/>
</dbReference>
<dbReference type="NCBIfam" id="TIGR00200">
    <property type="entry name" value="cinA_nterm"/>
    <property type="match status" value="1"/>
</dbReference>
<dbReference type="NCBIfam" id="TIGR00199">
    <property type="entry name" value="PncC_domain"/>
    <property type="match status" value="1"/>
</dbReference>
<dbReference type="NCBIfam" id="NF001813">
    <property type="entry name" value="PRK00549.1"/>
    <property type="match status" value="1"/>
</dbReference>
<dbReference type="PANTHER" id="PTHR13939">
    <property type="entry name" value="NICOTINAMIDE-NUCLEOTIDE AMIDOHYDROLASE PNCC"/>
    <property type="match status" value="1"/>
</dbReference>
<dbReference type="PANTHER" id="PTHR13939:SF0">
    <property type="entry name" value="NMN AMIDOHYDROLASE-LIKE PROTEIN YFAY"/>
    <property type="match status" value="1"/>
</dbReference>
<dbReference type="Pfam" id="PF02464">
    <property type="entry name" value="CinA"/>
    <property type="match status" value="1"/>
</dbReference>
<dbReference type="Pfam" id="PF18146">
    <property type="entry name" value="CinA_KH"/>
    <property type="match status" value="1"/>
</dbReference>
<dbReference type="Pfam" id="PF00994">
    <property type="entry name" value="MoCF_biosynth"/>
    <property type="match status" value="1"/>
</dbReference>
<dbReference type="PIRSF" id="PIRSF006728">
    <property type="entry name" value="CinA"/>
    <property type="match status" value="1"/>
</dbReference>
<dbReference type="SMART" id="SM00852">
    <property type="entry name" value="MoCF_biosynth"/>
    <property type="match status" value="1"/>
</dbReference>
<dbReference type="SUPFAM" id="SSF142433">
    <property type="entry name" value="CinA-like"/>
    <property type="match status" value="1"/>
</dbReference>
<dbReference type="SUPFAM" id="SSF53218">
    <property type="entry name" value="Molybdenum cofactor biosynthesis proteins"/>
    <property type="match status" value="1"/>
</dbReference>
<evidence type="ECO:0000255" key="1">
    <source>
        <dbReference type="HAMAP-Rule" id="MF_00226"/>
    </source>
</evidence>